<keyword id="KW-0167">Capsid protein</keyword>
<keyword id="KW-1048">Host nucleus</keyword>
<keyword id="KW-1185">Reference proteome</keyword>
<keyword id="KW-1147">T=16 icosahedral capsid protein</keyword>
<keyword id="KW-0946">Virion</keyword>
<protein>
    <recommendedName>
        <fullName evidence="1">Major capsid protein</fullName>
        <shortName evidence="1">MCP</shortName>
    </recommendedName>
</protein>
<evidence type="ECO:0000255" key="1">
    <source>
        <dbReference type="HAMAP-Rule" id="MF_04016"/>
    </source>
</evidence>
<dbReference type="EMBL" id="AF243438">
    <property type="protein sequence ID" value="AAG14211.1"/>
    <property type="molecule type" value="Genomic_DNA"/>
</dbReference>
<dbReference type="RefSeq" id="YP_001033947.1">
    <property type="nucleotide sequence ID" value="NC_002229.3"/>
</dbReference>
<dbReference type="SMR" id="Q9E6P8"/>
<dbReference type="GeneID" id="4811492"/>
<dbReference type="KEGG" id="vg:4811492"/>
<dbReference type="Proteomes" id="UP000008072">
    <property type="component" value="Segment"/>
</dbReference>
<dbReference type="GO" id="GO:0042025">
    <property type="term" value="C:host cell nucleus"/>
    <property type="evidence" value="ECO:0007669"/>
    <property type="project" value="UniProtKB-SubCell"/>
</dbReference>
<dbReference type="GO" id="GO:0039622">
    <property type="term" value="C:T=16 icosahedral viral capsid"/>
    <property type="evidence" value="ECO:0007669"/>
    <property type="project" value="UniProtKB-KW"/>
</dbReference>
<dbReference type="GO" id="GO:0005198">
    <property type="term" value="F:structural molecule activity"/>
    <property type="evidence" value="ECO:0007669"/>
    <property type="project" value="InterPro"/>
</dbReference>
<dbReference type="HAMAP" id="MF_04016">
    <property type="entry name" value="HSV_MCP"/>
    <property type="match status" value="1"/>
</dbReference>
<dbReference type="InterPro" id="IPR000912">
    <property type="entry name" value="Herpes_MCP"/>
</dbReference>
<dbReference type="InterPro" id="IPR023233">
    <property type="entry name" value="Herpes_MCP_upper_sf"/>
</dbReference>
<dbReference type="Pfam" id="PF03122">
    <property type="entry name" value="Herpes_MCP"/>
    <property type="match status" value="1"/>
</dbReference>
<dbReference type="PRINTS" id="PR00235">
    <property type="entry name" value="HSVCAPSIDMCP"/>
</dbReference>
<dbReference type="SUPFAM" id="SSF103417">
    <property type="entry name" value="Major capsid protein VP5"/>
    <property type="match status" value="1"/>
</dbReference>
<organismHost>
    <name type="scientific">Gallus gallus</name>
    <name type="common">Chicken</name>
    <dbReference type="NCBI Taxonomy" id="9031"/>
</organismHost>
<name>MCP_GAHVM</name>
<organism>
    <name type="scientific">Gallid herpesvirus 2 (strain Chicken/Md5/ATCC VR-987)</name>
    <name type="common">GaHV-2</name>
    <name type="synonym">Marek's disease herpesvirus type 1</name>
    <dbReference type="NCBI Taxonomy" id="10389"/>
    <lineage>
        <taxon>Viruses</taxon>
        <taxon>Duplodnaviria</taxon>
        <taxon>Heunggongvirae</taxon>
        <taxon>Peploviricota</taxon>
        <taxon>Herviviricetes</taxon>
        <taxon>Herpesvirales</taxon>
        <taxon>Orthoherpesviridae</taxon>
        <taxon>Alphaherpesvirinae</taxon>
        <taxon>Mardivirus</taxon>
        <taxon>Mardivirus gallidalpha2</taxon>
        <taxon>Gallid alphaherpesvirus 2</taxon>
    </lineage>
</organism>
<proteinExistence type="inferred from homology"/>
<sequence>MAGCHCPPAGDCPPVAPCTFSTPFNIGATLAPTGRLLSTIEMSSHRCMFDYFKQFSSDDNGRYAAQFDLLLGTYCNTLSLIRFLETGLSVACVCTRAPDLMYMREGTVQFEIQQPMIAREGPHPADQPIHTYMVKRLCRRSLSAAFVVAAEALALLSEVSLDGTAISTHLRMRAIQQLARNVRTILDSFERGTVDQMLRILLEKAPPAPLLIPLSRSQAEGRIAGQVMRANLVSELKRTVRTESFIMNKTNANRDTIISFLTKMVNCTHQTISMPRLTHSDSKGRLVDGVLVTTTMVRQKLLSGILDVVDTSARVPVTYGEMIISGTNLVTAVVMGKAVRNMDDIARYILNLKEDNIIDRTDEIVRGDDDRPQTAEISAELVTIGDKLIFLESMERRVYQATQVQYPLIGHVDLTFIMPLGIYQKRGDRYARHIGDYAPGPGCNVGDIRIFPPREIYFYNKDNQVISLSLSDAIGTLCHSSFLDVEATVGNLRNGKYTLSCVLGAYVTNPPALPLADASRQFFENIGEFLRDPPRWIDECHMTVEQFLSTGNPYLSMELHPAFDFFVVPGDVDLPGPHNVPQVMASISASLRVCNCNIPLPLCNSDFRDALGQELASTHHKMSDATINAVSATFSDISYPTAFYIIEAVIHGSERNFGLLMRLVIQCIRSYWDNCKRVAFVNNFHMVAFIDTYLCSGELPEECTNVYKDLMHHVRALRSIVRNYTVQTDPLYGQSHEELNHVLIDRTILPPLLWDCDPLIYQAEGMRDRDLYLNVGSENNYAVRPWLELQDADFQRTGNVLIHNRPIRDADRQTFVPHHAQEWTTLSKIYYYVMVPSFSRGQCCTMGIRFDNIYATSQSVIIPDLQPDEEPPLGPEDPRHPLNGRNLVPNTFNVMLHNARISVDADALLTLQETVNNMAERTTAILYGSTPDIGSSSSSTRHMRTFDGALHHGLLMMAYPCNDETVAAGTYFYPVPVNALFACHDHLAAVRDLPGNSRTLLYRAPPVPPFLGANYYSTFRQPVAQYVKESRCGPNEISYALMAGYFKLSPIGLYHQLRTGLHPGIAFTVIRQDRFLADMGLFAERASESYFLGQVSVTKRPHAGGVQFSLTQPRANVDLGVGYTATCTPLLLRNAITDMGNTVQSLHLTRGSPPLLHQEADEFLRKVTTRGQRAAPQRTVPFLGTLMPNLPSGLEHGQMSICEFIPTPVSADLEYFRTPCNPRGRAAGAIHSGEEASDIDDVMYDHQQGDPAYPFRATNNPWASQRLSYADKLYNGVYNLSGASPLFSPTYKFFTPAEVCCKTRCLDKLIGEAGSALASFASDGEVQFKRPIGSTELTEDPCSLFQEAYPILCATDKALLRAYSTGTTDNPETHLAQYLIRDASPIGGCLPIC</sequence>
<reference key="1">
    <citation type="journal article" date="2000" name="J. Virol.">
        <title>The genome of a very virulent Marek's disease virus.</title>
        <authorList>
            <person name="Tulman E.R."/>
            <person name="Afonso C.L."/>
            <person name="Lu Z."/>
            <person name="Zsak L."/>
            <person name="Rock D.L."/>
            <person name="Kutish G.F."/>
        </authorList>
    </citation>
    <scope>NUCLEOTIDE SEQUENCE [LARGE SCALE GENOMIC DNA]</scope>
</reference>
<gene>
    <name evidence="1" type="primary">MCP</name>
    <name type="synonym">MDV031</name>
</gene>
<comment type="function">
    <text evidence="1">Self-assembles to form an icosahedral capsid with a T=16 symmetry, about 200 nm in diameter, and consisting of 150 hexons and 12 pentons (total of 162 capsomers). Hexons form the edges and faces of the capsid and are each composed of six MCP molecules. In contrast, one penton is found at each of the 12 vertices. Eleven of the pentons are MCP pentamers, while the last vertex is occupied by the portal complex. The capsid is surrounded by a layer of proteinaceous material designated the tegument which, in turn, is enclosed in an envelope of host cell-derived lipids containing virus-encoded glycoproteins.</text>
</comment>
<comment type="subunit">
    <text evidence="1">Homomultimer. Makes the hexons and eleven out of twelve pentons. Interacts with triplex proteins 1/TRX1 and 2/TRX2; adjacent capsomers are linked together in groups of three by triplexes, heterotrimeric complexes composed of one molecule of TRX1 and two molecules of TRX2. Interacts with scaffold protein; this interaction allows efficient MCP transport to the host nucleus. Interacts with capsid vertex component 2/CVC2. Interacts with the small capsomere-interacting protein/SCP.</text>
</comment>
<comment type="subcellular location">
    <subcellularLocation>
        <location evidence="1">Virion</location>
    </subcellularLocation>
    <subcellularLocation>
        <location evidence="1">Host nucleus</location>
    </subcellularLocation>
</comment>
<comment type="similarity">
    <text evidence="1">Belongs to the herpesviridae major capsid protein family.</text>
</comment>
<feature type="chain" id="PRO_0000406506" description="Major capsid protein">
    <location>
        <begin position="1"/>
        <end position="1393"/>
    </location>
</feature>
<accession>Q9E6P8</accession>